<dbReference type="EC" id="5.4.2.11" evidence="1"/>
<dbReference type="EMBL" id="AP006618">
    <property type="protein sequence ID" value="BAD60041.1"/>
    <property type="molecule type" value="Genomic_DNA"/>
</dbReference>
<dbReference type="RefSeq" id="WP_011211723.1">
    <property type="nucleotide sequence ID" value="NC_006361.1"/>
</dbReference>
<dbReference type="SMR" id="Q5YP50"/>
<dbReference type="STRING" id="247156.NFA_51890"/>
<dbReference type="GeneID" id="61135765"/>
<dbReference type="KEGG" id="nfa:NFA_51890"/>
<dbReference type="eggNOG" id="COG0588">
    <property type="taxonomic scope" value="Bacteria"/>
</dbReference>
<dbReference type="HOGENOM" id="CLU_033323_1_1_11"/>
<dbReference type="OrthoDB" id="9781415at2"/>
<dbReference type="UniPathway" id="UPA00109">
    <property type="reaction ID" value="UER00186"/>
</dbReference>
<dbReference type="Proteomes" id="UP000006820">
    <property type="component" value="Chromosome"/>
</dbReference>
<dbReference type="GO" id="GO:0004619">
    <property type="term" value="F:phosphoglycerate mutase activity"/>
    <property type="evidence" value="ECO:0007669"/>
    <property type="project" value="UniProtKB-EC"/>
</dbReference>
<dbReference type="GO" id="GO:0006094">
    <property type="term" value="P:gluconeogenesis"/>
    <property type="evidence" value="ECO:0007669"/>
    <property type="project" value="UniProtKB-UniRule"/>
</dbReference>
<dbReference type="GO" id="GO:0006096">
    <property type="term" value="P:glycolytic process"/>
    <property type="evidence" value="ECO:0007669"/>
    <property type="project" value="UniProtKB-UniRule"/>
</dbReference>
<dbReference type="CDD" id="cd07067">
    <property type="entry name" value="HP_PGM_like"/>
    <property type="match status" value="1"/>
</dbReference>
<dbReference type="FunFam" id="3.40.50.1240:FF:000012">
    <property type="entry name" value="Phosphoglycerate mutase 1"/>
    <property type="match status" value="1"/>
</dbReference>
<dbReference type="Gene3D" id="3.40.50.1240">
    <property type="entry name" value="Phosphoglycerate mutase-like"/>
    <property type="match status" value="1"/>
</dbReference>
<dbReference type="HAMAP" id="MF_01039">
    <property type="entry name" value="PGAM_GpmA"/>
    <property type="match status" value="1"/>
</dbReference>
<dbReference type="InterPro" id="IPR013078">
    <property type="entry name" value="His_Pase_superF_clade-1"/>
</dbReference>
<dbReference type="InterPro" id="IPR029033">
    <property type="entry name" value="His_PPase_superfam"/>
</dbReference>
<dbReference type="InterPro" id="IPR001345">
    <property type="entry name" value="PG/BPGM_mutase_AS"/>
</dbReference>
<dbReference type="InterPro" id="IPR005952">
    <property type="entry name" value="Phosphogly_mut1"/>
</dbReference>
<dbReference type="NCBIfam" id="TIGR01258">
    <property type="entry name" value="pgm_1"/>
    <property type="match status" value="1"/>
</dbReference>
<dbReference type="NCBIfam" id="NF010713">
    <property type="entry name" value="PRK14115.1"/>
    <property type="match status" value="1"/>
</dbReference>
<dbReference type="NCBIfam" id="NF010718">
    <property type="entry name" value="PRK14120.1"/>
    <property type="match status" value="1"/>
</dbReference>
<dbReference type="PANTHER" id="PTHR11931">
    <property type="entry name" value="PHOSPHOGLYCERATE MUTASE"/>
    <property type="match status" value="1"/>
</dbReference>
<dbReference type="Pfam" id="PF00300">
    <property type="entry name" value="His_Phos_1"/>
    <property type="match status" value="2"/>
</dbReference>
<dbReference type="PIRSF" id="PIRSF000709">
    <property type="entry name" value="6PFK_2-Ptase"/>
    <property type="match status" value="1"/>
</dbReference>
<dbReference type="SMART" id="SM00855">
    <property type="entry name" value="PGAM"/>
    <property type="match status" value="1"/>
</dbReference>
<dbReference type="SUPFAM" id="SSF53254">
    <property type="entry name" value="Phosphoglycerate mutase-like"/>
    <property type="match status" value="1"/>
</dbReference>
<dbReference type="PROSITE" id="PS00175">
    <property type="entry name" value="PG_MUTASE"/>
    <property type="match status" value="1"/>
</dbReference>
<protein>
    <recommendedName>
        <fullName evidence="1">2,3-bisphosphoglycerate-dependent phosphoglycerate mutase</fullName>
        <shortName evidence="1">BPG-dependent PGAM</shortName>
        <shortName evidence="1">PGAM</shortName>
        <shortName evidence="1">Phosphoglyceromutase</shortName>
        <shortName evidence="1">dPGM</shortName>
        <ecNumber evidence="1">5.4.2.11</ecNumber>
    </recommendedName>
</protein>
<accession>Q5YP50</accession>
<keyword id="KW-0312">Gluconeogenesis</keyword>
<keyword id="KW-0324">Glycolysis</keyword>
<keyword id="KW-0413">Isomerase</keyword>
<keyword id="KW-1185">Reference proteome</keyword>
<sequence>MTYTLVLLRHGESEWNALNLFTGWVDVHLTDKGVAEGKRAGELLAEHGILPDIVYTSLLRRAISTANIALDAADRHWIPVVRDWRLNERHYGELQGKNKAQIRDKYGEEQFMLWRRSYDTPPPPIEAGNEYSQEGDARYAGIDIPKTECLLDVVNRMVPYWESTISKDLLAGKTVLIAAHGNSLRALVKHLDQISDEEIAGLNIPTGIPLRYELDENLRPVRPREYLDPEAAAAGAAAVASQGGK</sequence>
<comment type="function">
    <text evidence="1">Catalyzes the interconversion of 2-phosphoglycerate and 3-phosphoglycerate.</text>
</comment>
<comment type="catalytic activity">
    <reaction evidence="1">
        <text>(2R)-2-phosphoglycerate = (2R)-3-phosphoglycerate</text>
        <dbReference type="Rhea" id="RHEA:15901"/>
        <dbReference type="ChEBI" id="CHEBI:58272"/>
        <dbReference type="ChEBI" id="CHEBI:58289"/>
        <dbReference type="EC" id="5.4.2.11"/>
    </reaction>
</comment>
<comment type="pathway">
    <text evidence="1">Carbohydrate degradation; glycolysis; pyruvate from D-glyceraldehyde 3-phosphate: step 3/5.</text>
</comment>
<comment type="similarity">
    <text evidence="1">Belongs to the phosphoglycerate mutase family. BPG-dependent PGAM subfamily.</text>
</comment>
<organism>
    <name type="scientific">Nocardia farcinica (strain IFM 10152)</name>
    <dbReference type="NCBI Taxonomy" id="247156"/>
    <lineage>
        <taxon>Bacteria</taxon>
        <taxon>Bacillati</taxon>
        <taxon>Actinomycetota</taxon>
        <taxon>Actinomycetes</taxon>
        <taxon>Mycobacteriales</taxon>
        <taxon>Nocardiaceae</taxon>
        <taxon>Nocardia</taxon>
    </lineage>
</organism>
<name>GPMA_NOCFA</name>
<gene>
    <name evidence="1" type="primary">gpmA</name>
    <name type="ordered locus">NFA_51890</name>
</gene>
<reference key="1">
    <citation type="journal article" date="2004" name="Proc. Natl. Acad. Sci. U.S.A.">
        <title>The complete genomic sequence of Nocardia farcinica IFM 10152.</title>
        <authorList>
            <person name="Ishikawa J."/>
            <person name="Yamashita A."/>
            <person name="Mikami Y."/>
            <person name="Hoshino Y."/>
            <person name="Kurita H."/>
            <person name="Hotta K."/>
            <person name="Shiba T."/>
            <person name="Hattori M."/>
        </authorList>
    </citation>
    <scope>NUCLEOTIDE SEQUENCE [LARGE SCALE GENOMIC DNA]</scope>
    <source>
        <strain>IFM 10152</strain>
    </source>
</reference>
<feature type="chain" id="PRO_0000229133" description="2,3-bisphosphoglycerate-dependent phosphoglycerate mutase">
    <location>
        <begin position="1"/>
        <end position="245"/>
    </location>
</feature>
<feature type="active site" description="Tele-phosphohistidine intermediate" evidence="1">
    <location>
        <position position="10"/>
    </location>
</feature>
<feature type="active site" description="Proton donor/acceptor" evidence="1">
    <location>
        <position position="88"/>
    </location>
</feature>
<feature type="binding site" evidence="1">
    <location>
        <begin position="9"/>
        <end position="16"/>
    </location>
    <ligand>
        <name>substrate</name>
    </ligand>
</feature>
<feature type="binding site" evidence="1">
    <location>
        <begin position="22"/>
        <end position="23"/>
    </location>
    <ligand>
        <name>substrate</name>
    </ligand>
</feature>
<feature type="binding site" evidence="1">
    <location>
        <position position="61"/>
    </location>
    <ligand>
        <name>substrate</name>
    </ligand>
</feature>
<feature type="binding site" evidence="1">
    <location>
        <begin position="88"/>
        <end position="91"/>
    </location>
    <ligand>
        <name>substrate</name>
    </ligand>
</feature>
<feature type="binding site" evidence="1">
    <location>
        <position position="99"/>
    </location>
    <ligand>
        <name>substrate</name>
    </ligand>
</feature>
<feature type="binding site" evidence="1">
    <location>
        <begin position="115"/>
        <end position="116"/>
    </location>
    <ligand>
        <name>substrate</name>
    </ligand>
</feature>
<feature type="binding site" evidence="1">
    <location>
        <begin position="181"/>
        <end position="182"/>
    </location>
    <ligand>
        <name>substrate</name>
    </ligand>
</feature>
<feature type="site" description="Transition state stabilizer" evidence="1">
    <location>
        <position position="180"/>
    </location>
</feature>
<proteinExistence type="inferred from homology"/>
<evidence type="ECO:0000255" key="1">
    <source>
        <dbReference type="HAMAP-Rule" id="MF_01039"/>
    </source>
</evidence>